<feature type="chain" id="PRO_1000190261" description="Probable potassium transport system protein Kup">
    <location>
        <begin position="1"/>
        <end position="637"/>
    </location>
</feature>
<feature type="transmembrane region" description="Helical" evidence="1">
    <location>
        <begin position="24"/>
        <end position="44"/>
    </location>
</feature>
<feature type="transmembrane region" description="Helical" evidence="1">
    <location>
        <begin position="64"/>
        <end position="84"/>
    </location>
</feature>
<feature type="transmembrane region" description="Helical" evidence="1">
    <location>
        <begin position="113"/>
        <end position="133"/>
    </location>
</feature>
<feature type="transmembrane region" description="Helical" evidence="1">
    <location>
        <begin position="151"/>
        <end position="171"/>
    </location>
</feature>
<feature type="transmembrane region" description="Helical" evidence="1">
    <location>
        <begin position="182"/>
        <end position="202"/>
    </location>
</feature>
<feature type="transmembrane region" description="Helical" evidence="1">
    <location>
        <begin position="225"/>
        <end position="245"/>
    </location>
</feature>
<feature type="transmembrane region" description="Helical" evidence="1">
    <location>
        <begin position="261"/>
        <end position="281"/>
    </location>
</feature>
<feature type="transmembrane region" description="Helical" evidence="1">
    <location>
        <begin position="290"/>
        <end position="310"/>
    </location>
</feature>
<feature type="transmembrane region" description="Helical" evidence="1">
    <location>
        <begin position="351"/>
        <end position="371"/>
    </location>
</feature>
<feature type="transmembrane region" description="Helical" evidence="1">
    <location>
        <begin position="381"/>
        <end position="401"/>
    </location>
</feature>
<feature type="transmembrane region" description="Helical" evidence="1">
    <location>
        <begin position="409"/>
        <end position="429"/>
    </location>
</feature>
<feature type="transmembrane region" description="Helical" evidence="1">
    <location>
        <begin position="433"/>
        <end position="453"/>
    </location>
</feature>
<proteinExistence type="inferred from homology"/>
<organism>
    <name type="scientific">Burkholderia ambifaria (strain MC40-6)</name>
    <dbReference type="NCBI Taxonomy" id="398577"/>
    <lineage>
        <taxon>Bacteria</taxon>
        <taxon>Pseudomonadati</taxon>
        <taxon>Pseudomonadota</taxon>
        <taxon>Betaproteobacteria</taxon>
        <taxon>Burkholderiales</taxon>
        <taxon>Burkholderiaceae</taxon>
        <taxon>Burkholderia</taxon>
        <taxon>Burkholderia cepacia complex</taxon>
    </lineage>
</organism>
<gene>
    <name evidence="1" type="primary">kup</name>
    <name type="ordered locus">BamMC406_1710</name>
</gene>
<protein>
    <recommendedName>
        <fullName evidence="1">Probable potassium transport system protein Kup</fullName>
    </recommendedName>
</protein>
<dbReference type="EMBL" id="CP001025">
    <property type="protein sequence ID" value="ACB64195.1"/>
    <property type="molecule type" value="Genomic_DNA"/>
</dbReference>
<dbReference type="RefSeq" id="WP_012363986.1">
    <property type="nucleotide sequence ID" value="NC_010551.1"/>
</dbReference>
<dbReference type="KEGG" id="bac:BamMC406_1710"/>
<dbReference type="HOGENOM" id="CLU_008142_4_2_4"/>
<dbReference type="OrthoDB" id="9805577at2"/>
<dbReference type="Proteomes" id="UP000001680">
    <property type="component" value="Chromosome 1"/>
</dbReference>
<dbReference type="GO" id="GO:0005886">
    <property type="term" value="C:plasma membrane"/>
    <property type="evidence" value="ECO:0007669"/>
    <property type="project" value="UniProtKB-SubCell"/>
</dbReference>
<dbReference type="GO" id="GO:0015079">
    <property type="term" value="F:potassium ion transmembrane transporter activity"/>
    <property type="evidence" value="ECO:0007669"/>
    <property type="project" value="UniProtKB-UniRule"/>
</dbReference>
<dbReference type="GO" id="GO:0015293">
    <property type="term" value="F:symporter activity"/>
    <property type="evidence" value="ECO:0007669"/>
    <property type="project" value="UniProtKB-UniRule"/>
</dbReference>
<dbReference type="HAMAP" id="MF_01522">
    <property type="entry name" value="Kup"/>
    <property type="match status" value="1"/>
</dbReference>
<dbReference type="InterPro" id="IPR003855">
    <property type="entry name" value="K+_transporter"/>
</dbReference>
<dbReference type="InterPro" id="IPR053952">
    <property type="entry name" value="K_trans_C"/>
</dbReference>
<dbReference type="InterPro" id="IPR053951">
    <property type="entry name" value="K_trans_N"/>
</dbReference>
<dbReference type="InterPro" id="IPR023051">
    <property type="entry name" value="Kup"/>
</dbReference>
<dbReference type="PANTHER" id="PTHR30540:SF79">
    <property type="entry name" value="LOW AFFINITY POTASSIUM TRANSPORT SYSTEM PROTEIN KUP"/>
    <property type="match status" value="1"/>
</dbReference>
<dbReference type="PANTHER" id="PTHR30540">
    <property type="entry name" value="OSMOTIC STRESS POTASSIUM TRANSPORTER"/>
    <property type="match status" value="1"/>
</dbReference>
<dbReference type="Pfam" id="PF02705">
    <property type="entry name" value="K_trans"/>
    <property type="match status" value="1"/>
</dbReference>
<dbReference type="Pfam" id="PF22776">
    <property type="entry name" value="K_trans_C"/>
    <property type="match status" value="1"/>
</dbReference>
<comment type="function">
    <text evidence="1">Transport of potassium into the cell. Likely operates as a K(+):H(+) symporter.</text>
</comment>
<comment type="catalytic activity">
    <reaction evidence="1">
        <text>K(+)(in) + H(+)(in) = K(+)(out) + H(+)(out)</text>
        <dbReference type="Rhea" id="RHEA:28490"/>
        <dbReference type="ChEBI" id="CHEBI:15378"/>
        <dbReference type="ChEBI" id="CHEBI:29103"/>
    </reaction>
    <physiologicalReaction direction="right-to-left" evidence="1">
        <dbReference type="Rhea" id="RHEA:28492"/>
    </physiologicalReaction>
</comment>
<comment type="subcellular location">
    <subcellularLocation>
        <location evidence="1">Cell inner membrane</location>
        <topology evidence="1">Multi-pass membrane protein</topology>
    </subcellularLocation>
</comment>
<comment type="similarity">
    <text evidence="1">Belongs to the HAK/KUP transporter (TC 2.A.72) family.</text>
</comment>
<keyword id="KW-0997">Cell inner membrane</keyword>
<keyword id="KW-1003">Cell membrane</keyword>
<keyword id="KW-0406">Ion transport</keyword>
<keyword id="KW-0472">Membrane</keyword>
<keyword id="KW-0630">Potassium</keyword>
<keyword id="KW-0633">Potassium transport</keyword>
<keyword id="KW-0769">Symport</keyword>
<keyword id="KW-0812">Transmembrane</keyword>
<keyword id="KW-1133">Transmembrane helix</keyword>
<keyword id="KW-0813">Transport</keyword>
<accession>B1YR31</accession>
<sequence length="637" mass="69073">MNDTIQATDAAHAHSTHQHSMRALAIAAIGVVFGDIGTSPLYALKEAFSPAHGIPLTESSILGVISLLFWAIILVVGIKYLLFVMRADNNGEGGVLALMALSLRPLDSKTRVAGALMALGIFGACMFYGDAVITPAISVMSAVEGLEIATPHLSHLVLPITIVILIALFWIQRHGTALVGKLFGPIMVVWFVVIAALGVYHIARVPGIIAAINPYYAASFMADHLLQAYVVLGSVVLVLTGAEALYADMGHFGAKPIRLAAYGLVMPSLVLNYFGQGALLIQNPKAIENPFFLLAPEWALLPLVVLSTVATVIASQAVISGAYSLTSQAIQLGYVPRMKVLHTSELAIGQIYVPVVNWLLLFVILCIVIGFKSSDNLAAAYGIAVTATMVITTVLACVVMVKVWNWNRLLVGAIIAIFLAIDLGFFGANLLKVAQGGWLPLGIGALLFFLLMTWYKGRHIVKERTAADGIPLEPFLQGLLAHPPHRVSGTAIYLTGNDKLVPVSLLHNLKHNKVLHERTIFLTFVTRDIPYVRDDTRLSSRDAGGGLYIVKAQYGFNETPDVKAVLEEFGRSHDMTFELMDTSFFLARETVVPTHLPGMSIWRERVFAWMHQNAAKPTDFFSIPANRVVELGTKIEI</sequence>
<evidence type="ECO:0000255" key="1">
    <source>
        <dbReference type="HAMAP-Rule" id="MF_01522"/>
    </source>
</evidence>
<name>KUP_BURA4</name>
<reference key="1">
    <citation type="submission" date="2008-04" db="EMBL/GenBank/DDBJ databases">
        <title>Complete sequence of chromosome 1 of Burkholderia ambifaria MC40-6.</title>
        <authorList>
            <person name="Copeland A."/>
            <person name="Lucas S."/>
            <person name="Lapidus A."/>
            <person name="Glavina del Rio T."/>
            <person name="Dalin E."/>
            <person name="Tice H."/>
            <person name="Pitluck S."/>
            <person name="Chain P."/>
            <person name="Malfatti S."/>
            <person name="Shin M."/>
            <person name="Vergez L."/>
            <person name="Lang D."/>
            <person name="Schmutz J."/>
            <person name="Larimer F."/>
            <person name="Land M."/>
            <person name="Hauser L."/>
            <person name="Kyrpides N."/>
            <person name="Lykidis A."/>
            <person name="Ramette A."/>
            <person name="Konstantinidis K."/>
            <person name="Tiedje J."/>
            <person name="Richardson P."/>
        </authorList>
    </citation>
    <scope>NUCLEOTIDE SEQUENCE [LARGE SCALE GENOMIC DNA]</scope>
    <source>
        <strain>MC40-6</strain>
    </source>
</reference>